<protein>
    <recommendedName>
        <fullName evidence="1">Phenylalanine--tRNA ligase beta subunit</fullName>
        <ecNumber evidence="1">6.1.1.20</ecNumber>
    </recommendedName>
    <alternativeName>
        <fullName evidence="1">Phenylalanyl-tRNA synthetase beta subunit</fullName>
        <shortName evidence="1">PheRS</shortName>
    </alternativeName>
</protein>
<feature type="chain" id="PRO_0000126899" description="Phenylalanine--tRNA ligase beta subunit">
    <location>
        <begin position="1"/>
        <end position="805"/>
    </location>
</feature>
<feature type="domain" description="tRNA-binding" evidence="1">
    <location>
        <begin position="39"/>
        <end position="154"/>
    </location>
</feature>
<feature type="domain" description="B5" evidence="1">
    <location>
        <begin position="410"/>
        <end position="485"/>
    </location>
</feature>
<feature type="domain" description="FDX-ACB" evidence="1">
    <location>
        <begin position="712"/>
        <end position="805"/>
    </location>
</feature>
<feature type="binding site" evidence="1">
    <location>
        <position position="463"/>
    </location>
    <ligand>
        <name>Mg(2+)</name>
        <dbReference type="ChEBI" id="CHEBI:18420"/>
        <note>shared with alpha subunit</note>
    </ligand>
</feature>
<feature type="binding site" evidence="1">
    <location>
        <position position="469"/>
    </location>
    <ligand>
        <name>Mg(2+)</name>
        <dbReference type="ChEBI" id="CHEBI:18420"/>
        <note>shared with alpha subunit</note>
    </ligand>
</feature>
<feature type="binding site" evidence="1">
    <location>
        <position position="472"/>
    </location>
    <ligand>
        <name>Mg(2+)</name>
        <dbReference type="ChEBI" id="CHEBI:18420"/>
        <note>shared with alpha subunit</note>
    </ligand>
</feature>
<feature type="binding site" evidence="1">
    <location>
        <position position="473"/>
    </location>
    <ligand>
        <name>Mg(2+)</name>
        <dbReference type="ChEBI" id="CHEBI:18420"/>
        <note>shared with alpha subunit</note>
    </ligand>
</feature>
<keyword id="KW-0030">Aminoacyl-tRNA synthetase</keyword>
<keyword id="KW-0067">ATP-binding</keyword>
<keyword id="KW-0963">Cytoplasm</keyword>
<keyword id="KW-0436">Ligase</keyword>
<keyword id="KW-0460">Magnesium</keyword>
<keyword id="KW-0479">Metal-binding</keyword>
<keyword id="KW-0547">Nucleotide-binding</keyword>
<keyword id="KW-0648">Protein biosynthesis</keyword>
<keyword id="KW-1185">Reference proteome</keyword>
<keyword id="KW-0694">RNA-binding</keyword>
<keyword id="KW-0820">tRNA-binding</keyword>
<comment type="catalytic activity">
    <reaction evidence="1">
        <text>tRNA(Phe) + L-phenylalanine + ATP = L-phenylalanyl-tRNA(Phe) + AMP + diphosphate + H(+)</text>
        <dbReference type="Rhea" id="RHEA:19413"/>
        <dbReference type="Rhea" id="RHEA-COMP:9668"/>
        <dbReference type="Rhea" id="RHEA-COMP:9699"/>
        <dbReference type="ChEBI" id="CHEBI:15378"/>
        <dbReference type="ChEBI" id="CHEBI:30616"/>
        <dbReference type="ChEBI" id="CHEBI:33019"/>
        <dbReference type="ChEBI" id="CHEBI:58095"/>
        <dbReference type="ChEBI" id="CHEBI:78442"/>
        <dbReference type="ChEBI" id="CHEBI:78531"/>
        <dbReference type="ChEBI" id="CHEBI:456215"/>
        <dbReference type="EC" id="6.1.1.20"/>
    </reaction>
</comment>
<comment type="cofactor">
    <cofactor evidence="1">
        <name>Mg(2+)</name>
        <dbReference type="ChEBI" id="CHEBI:18420"/>
    </cofactor>
    <text evidence="1">Binds 2 magnesium ions per tetramer.</text>
</comment>
<comment type="subunit">
    <text evidence="1">Tetramer of two alpha and two beta subunits.</text>
</comment>
<comment type="subcellular location">
    <subcellularLocation>
        <location evidence="1">Cytoplasm</location>
    </subcellularLocation>
</comment>
<comment type="similarity">
    <text evidence="1">Belongs to the phenylalanyl-tRNA synthetase beta subunit family. Type 1 subfamily.</text>
</comment>
<name>SYFB_LACPL</name>
<sequence length="805" mass="88119">MRISTTWLRDYLKLDIPADELAEKIERTAVEVDGVIRPSEGLKKVVVGHVLTCEPHPDSDHLHVCQVDVGESEPLQIVCGAPNVAAGEKVIVALPNSWIGGHTKIKKSKMRGVPSNGMLCALDELGFDEKLVPKEVADGIFILPDDATPGDPVFSYLGMDDEIIDMSVTPNRGDMLSMNGTAHELAAIYDQQPTMPKVDLYEDATTVAADDLHVAVAADEHDVPMYKMRLIKNVTIKPSPLWLQIRIWNAGMRPINNVVDATNYILMQYGQPLHAFDFDQLNDGQINVRLAKAGEHLTTLDGEDRELLTSDLLICSGDQPICLAGTMGGLATEVTDQTTTIALEGAVFDAVKIRKTAHNHDLHSEASMRYERGIDHGMTATALDAAAAMIAELGDGQVASGMVIGRDEDVQPTTVTIDLARINHVLGTELSLDTVSDIFKRLDFPTVVANETFTVTVPSRRWDIHIPADLIEEIARLYGYDNLPATLPTGQPTIGKLNETQQVIRDSRKLMESAGLTQAISYSLTTETKSKAFALHASDVTKLDFPMSSERTTLRLSLVSGLLDDLAYNNARKEHNVALYEEGRVFYSQPEQVRPKEIEHIAGAITGSMVPKSWGVAEQPVDFFQIKGIVAGYLKSLALQDAVSYVATAEHPEMHPGRTADIYVGDQLVGFVGEVHPTTAKAYKIRETYVFELDLTALIALPKARQQYQPISKFPSITRDVAMLIDDDVTNATVVALINKKGGAHLRHVQLFDVYNGSHVPAGKKSLAYTLTYQDQNATLVDDDVTTAFEKVLTALTDELGAEIR</sequence>
<reference key="1">
    <citation type="journal article" date="2003" name="Proc. Natl. Acad. Sci. U.S.A.">
        <title>Complete genome sequence of Lactobacillus plantarum WCFS1.</title>
        <authorList>
            <person name="Kleerebezem M."/>
            <person name="Boekhorst J."/>
            <person name="van Kranenburg R."/>
            <person name="Molenaar D."/>
            <person name="Kuipers O.P."/>
            <person name="Leer R."/>
            <person name="Tarchini R."/>
            <person name="Peters S.A."/>
            <person name="Sandbrink H.M."/>
            <person name="Fiers M.W.E.J."/>
            <person name="Stiekema W."/>
            <person name="Klein Lankhorst R.M."/>
            <person name="Bron P.A."/>
            <person name="Hoffer S.M."/>
            <person name="Nierop Groot M.N."/>
            <person name="Kerkhoven R."/>
            <person name="De Vries M."/>
            <person name="Ursing B."/>
            <person name="De Vos W.M."/>
            <person name="Siezen R.J."/>
        </authorList>
    </citation>
    <scope>NUCLEOTIDE SEQUENCE [LARGE SCALE GENOMIC DNA]</scope>
    <source>
        <strain>ATCC BAA-793 / NCIMB 8826 / WCFS1</strain>
    </source>
</reference>
<reference key="2">
    <citation type="journal article" date="2012" name="J. Bacteriol.">
        <title>Complete resequencing and reannotation of the Lactobacillus plantarum WCFS1 genome.</title>
        <authorList>
            <person name="Siezen R.J."/>
            <person name="Francke C."/>
            <person name="Renckens B."/>
            <person name="Boekhorst J."/>
            <person name="Wels M."/>
            <person name="Kleerebezem M."/>
            <person name="van Hijum S.A."/>
        </authorList>
    </citation>
    <scope>NUCLEOTIDE SEQUENCE [LARGE SCALE GENOMIC DNA]</scope>
    <scope>GENOME REANNOTATION</scope>
    <source>
        <strain>ATCC BAA-793 / NCIMB 8826 / WCFS1</strain>
    </source>
</reference>
<gene>
    <name evidence="1" type="primary">pheT</name>
    <name type="ordered locus">lp_1559</name>
</gene>
<evidence type="ECO:0000255" key="1">
    <source>
        <dbReference type="HAMAP-Rule" id="MF_00283"/>
    </source>
</evidence>
<proteinExistence type="inferred from homology"/>
<organism>
    <name type="scientific">Lactiplantibacillus plantarum (strain ATCC BAA-793 / NCIMB 8826 / WCFS1)</name>
    <name type="common">Lactobacillus plantarum</name>
    <dbReference type="NCBI Taxonomy" id="220668"/>
    <lineage>
        <taxon>Bacteria</taxon>
        <taxon>Bacillati</taxon>
        <taxon>Bacillota</taxon>
        <taxon>Bacilli</taxon>
        <taxon>Lactobacillales</taxon>
        <taxon>Lactobacillaceae</taxon>
        <taxon>Lactiplantibacillus</taxon>
    </lineage>
</organism>
<accession>Q88WR2</accession>
<accession>F9UNT9</accession>
<dbReference type="EC" id="6.1.1.20" evidence="1"/>
<dbReference type="EMBL" id="AL935263">
    <property type="protein sequence ID" value="CCC78878.1"/>
    <property type="molecule type" value="Genomic_DNA"/>
</dbReference>
<dbReference type="RefSeq" id="WP_011101464.1">
    <property type="nucleotide sequence ID" value="NC_004567.2"/>
</dbReference>
<dbReference type="RefSeq" id="YP_004889392.1">
    <property type="nucleotide sequence ID" value="NC_004567.2"/>
</dbReference>
<dbReference type="SMR" id="Q88WR2"/>
<dbReference type="STRING" id="220668.lp_1559"/>
<dbReference type="EnsemblBacteria" id="CCC78878">
    <property type="protein sequence ID" value="CCC78878"/>
    <property type="gene ID" value="lp_1559"/>
</dbReference>
<dbReference type="KEGG" id="lpl:lp_1559"/>
<dbReference type="PATRIC" id="fig|220668.9.peg.1312"/>
<dbReference type="eggNOG" id="COG0072">
    <property type="taxonomic scope" value="Bacteria"/>
</dbReference>
<dbReference type="eggNOG" id="COG0073">
    <property type="taxonomic scope" value="Bacteria"/>
</dbReference>
<dbReference type="HOGENOM" id="CLU_016891_0_0_9"/>
<dbReference type="OrthoDB" id="9805455at2"/>
<dbReference type="PhylomeDB" id="Q88WR2"/>
<dbReference type="Proteomes" id="UP000000432">
    <property type="component" value="Chromosome"/>
</dbReference>
<dbReference type="GO" id="GO:0009328">
    <property type="term" value="C:phenylalanine-tRNA ligase complex"/>
    <property type="evidence" value="ECO:0007669"/>
    <property type="project" value="TreeGrafter"/>
</dbReference>
<dbReference type="GO" id="GO:0005524">
    <property type="term" value="F:ATP binding"/>
    <property type="evidence" value="ECO:0007669"/>
    <property type="project" value="UniProtKB-UniRule"/>
</dbReference>
<dbReference type="GO" id="GO:0140096">
    <property type="term" value="F:catalytic activity, acting on a protein"/>
    <property type="evidence" value="ECO:0007669"/>
    <property type="project" value="UniProtKB-ARBA"/>
</dbReference>
<dbReference type="GO" id="GO:0000287">
    <property type="term" value="F:magnesium ion binding"/>
    <property type="evidence" value="ECO:0007669"/>
    <property type="project" value="UniProtKB-UniRule"/>
</dbReference>
<dbReference type="GO" id="GO:0004826">
    <property type="term" value="F:phenylalanine-tRNA ligase activity"/>
    <property type="evidence" value="ECO:0007669"/>
    <property type="project" value="UniProtKB-UniRule"/>
</dbReference>
<dbReference type="GO" id="GO:0016740">
    <property type="term" value="F:transferase activity"/>
    <property type="evidence" value="ECO:0007669"/>
    <property type="project" value="UniProtKB-ARBA"/>
</dbReference>
<dbReference type="GO" id="GO:0000049">
    <property type="term" value="F:tRNA binding"/>
    <property type="evidence" value="ECO:0007669"/>
    <property type="project" value="UniProtKB-KW"/>
</dbReference>
<dbReference type="GO" id="GO:0006432">
    <property type="term" value="P:phenylalanyl-tRNA aminoacylation"/>
    <property type="evidence" value="ECO:0007669"/>
    <property type="project" value="UniProtKB-UniRule"/>
</dbReference>
<dbReference type="CDD" id="cd00769">
    <property type="entry name" value="PheRS_beta_core"/>
    <property type="match status" value="1"/>
</dbReference>
<dbReference type="CDD" id="cd02796">
    <property type="entry name" value="tRNA_bind_bactPheRS"/>
    <property type="match status" value="1"/>
</dbReference>
<dbReference type="FunFam" id="2.40.50.140:FF:000045">
    <property type="entry name" value="Phenylalanine--tRNA ligase beta subunit"/>
    <property type="match status" value="1"/>
</dbReference>
<dbReference type="FunFam" id="3.30.56.10:FF:000002">
    <property type="entry name" value="Phenylalanine--tRNA ligase beta subunit"/>
    <property type="match status" value="1"/>
</dbReference>
<dbReference type="FunFam" id="3.30.70.380:FF:000001">
    <property type="entry name" value="Phenylalanine--tRNA ligase beta subunit"/>
    <property type="match status" value="1"/>
</dbReference>
<dbReference type="FunFam" id="3.30.930.10:FF:000022">
    <property type="entry name" value="Phenylalanine--tRNA ligase beta subunit"/>
    <property type="match status" value="1"/>
</dbReference>
<dbReference type="Gene3D" id="3.30.56.10">
    <property type="match status" value="2"/>
</dbReference>
<dbReference type="Gene3D" id="3.30.930.10">
    <property type="entry name" value="Bira Bifunctional Protein, Domain 2"/>
    <property type="match status" value="1"/>
</dbReference>
<dbReference type="Gene3D" id="3.30.70.380">
    <property type="entry name" value="Ferrodoxin-fold anticodon-binding domain"/>
    <property type="match status" value="1"/>
</dbReference>
<dbReference type="Gene3D" id="2.40.50.140">
    <property type="entry name" value="Nucleic acid-binding proteins"/>
    <property type="match status" value="1"/>
</dbReference>
<dbReference type="Gene3D" id="3.50.40.10">
    <property type="entry name" value="Phenylalanyl-trna Synthetase, Chain B, domain 3"/>
    <property type="match status" value="1"/>
</dbReference>
<dbReference type="HAMAP" id="MF_00283">
    <property type="entry name" value="Phe_tRNA_synth_beta1"/>
    <property type="match status" value="1"/>
</dbReference>
<dbReference type="InterPro" id="IPR045864">
    <property type="entry name" value="aa-tRNA-synth_II/BPL/LPL"/>
</dbReference>
<dbReference type="InterPro" id="IPR005146">
    <property type="entry name" value="B3/B4_tRNA-bd"/>
</dbReference>
<dbReference type="InterPro" id="IPR009061">
    <property type="entry name" value="DNA-bd_dom_put_sf"/>
</dbReference>
<dbReference type="InterPro" id="IPR005121">
    <property type="entry name" value="Fdx_antiC-bd"/>
</dbReference>
<dbReference type="InterPro" id="IPR036690">
    <property type="entry name" value="Fdx_antiC-bd_sf"/>
</dbReference>
<dbReference type="InterPro" id="IPR012340">
    <property type="entry name" value="NA-bd_OB-fold"/>
</dbReference>
<dbReference type="InterPro" id="IPR045060">
    <property type="entry name" value="Phe-tRNA-ligase_IIc_bsu"/>
</dbReference>
<dbReference type="InterPro" id="IPR004532">
    <property type="entry name" value="Phe-tRNA-ligase_IIc_bsu_bact"/>
</dbReference>
<dbReference type="InterPro" id="IPR020825">
    <property type="entry name" value="Phe-tRNA_synthase-like_B3/B4"/>
</dbReference>
<dbReference type="InterPro" id="IPR041616">
    <property type="entry name" value="PheRS_beta_core"/>
</dbReference>
<dbReference type="InterPro" id="IPR002547">
    <property type="entry name" value="tRNA-bd_dom"/>
</dbReference>
<dbReference type="InterPro" id="IPR033714">
    <property type="entry name" value="tRNA_bind_bactPheRS"/>
</dbReference>
<dbReference type="InterPro" id="IPR005147">
    <property type="entry name" value="tRNA_synthase_B5-dom"/>
</dbReference>
<dbReference type="NCBIfam" id="TIGR00472">
    <property type="entry name" value="pheT_bact"/>
    <property type="match status" value="1"/>
</dbReference>
<dbReference type="NCBIfam" id="NF045760">
    <property type="entry name" value="YtpR"/>
    <property type="match status" value="1"/>
</dbReference>
<dbReference type="PANTHER" id="PTHR10947:SF0">
    <property type="entry name" value="PHENYLALANINE--TRNA LIGASE BETA SUBUNIT"/>
    <property type="match status" value="1"/>
</dbReference>
<dbReference type="PANTHER" id="PTHR10947">
    <property type="entry name" value="PHENYLALANYL-TRNA SYNTHETASE BETA CHAIN AND LEUCINE-RICH REPEAT-CONTAINING PROTEIN 47"/>
    <property type="match status" value="1"/>
</dbReference>
<dbReference type="Pfam" id="PF03483">
    <property type="entry name" value="B3_4"/>
    <property type="match status" value="1"/>
</dbReference>
<dbReference type="Pfam" id="PF03484">
    <property type="entry name" value="B5"/>
    <property type="match status" value="1"/>
</dbReference>
<dbReference type="Pfam" id="PF03147">
    <property type="entry name" value="FDX-ACB"/>
    <property type="match status" value="1"/>
</dbReference>
<dbReference type="Pfam" id="PF01588">
    <property type="entry name" value="tRNA_bind"/>
    <property type="match status" value="1"/>
</dbReference>
<dbReference type="Pfam" id="PF17759">
    <property type="entry name" value="tRNA_synthFbeta"/>
    <property type="match status" value="1"/>
</dbReference>
<dbReference type="SMART" id="SM00873">
    <property type="entry name" value="B3_4"/>
    <property type="match status" value="1"/>
</dbReference>
<dbReference type="SMART" id="SM00874">
    <property type="entry name" value="B5"/>
    <property type="match status" value="1"/>
</dbReference>
<dbReference type="SMART" id="SM00896">
    <property type="entry name" value="FDX-ACB"/>
    <property type="match status" value="1"/>
</dbReference>
<dbReference type="SUPFAM" id="SSF54991">
    <property type="entry name" value="Anticodon-binding domain of PheRS"/>
    <property type="match status" value="1"/>
</dbReference>
<dbReference type="SUPFAM" id="SSF55681">
    <property type="entry name" value="Class II aaRS and biotin synthetases"/>
    <property type="match status" value="1"/>
</dbReference>
<dbReference type="SUPFAM" id="SSF50249">
    <property type="entry name" value="Nucleic acid-binding proteins"/>
    <property type="match status" value="1"/>
</dbReference>
<dbReference type="SUPFAM" id="SSF56037">
    <property type="entry name" value="PheT/TilS domain"/>
    <property type="match status" value="1"/>
</dbReference>
<dbReference type="SUPFAM" id="SSF46955">
    <property type="entry name" value="Putative DNA-binding domain"/>
    <property type="match status" value="1"/>
</dbReference>
<dbReference type="PROSITE" id="PS51483">
    <property type="entry name" value="B5"/>
    <property type="match status" value="1"/>
</dbReference>
<dbReference type="PROSITE" id="PS51447">
    <property type="entry name" value="FDX_ACB"/>
    <property type="match status" value="1"/>
</dbReference>
<dbReference type="PROSITE" id="PS50886">
    <property type="entry name" value="TRBD"/>
    <property type="match status" value="1"/>
</dbReference>